<evidence type="ECO:0000255" key="1">
    <source>
        <dbReference type="HAMAP-Rule" id="MF_01037"/>
    </source>
</evidence>
<keyword id="KW-0963">Cytoplasm</keyword>
<keyword id="KW-0274">FAD</keyword>
<keyword id="KW-0285">Flavoprotein</keyword>
<keyword id="KW-0489">Methyltransferase</keyword>
<keyword id="KW-0520">NAD</keyword>
<keyword id="KW-0521">NADP</keyword>
<keyword id="KW-0808">Transferase</keyword>
<keyword id="KW-0819">tRNA processing</keyword>
<proteinExistence type="inferred from homology"/>
<feature type="chain" id="PRO_1000135891" description="Methylenetetrahydrofolate--tRNA-(uracil-5-)-methyltransferase TrmFO">
    <location>
        <begin position="1"/>
        <end position="444"/>
    </location>
</feature>
<feature type="binding site" evidence="1">
    <location>
        <begin position="10"/>
        <end position="15"/>
    </location>
    <ligand>
        <name>FAD</name>
        <dbReference type="ChEBI" id="CHEBI:57692"/>
    </ligand>
</feature>
<reference key="1">
    <citation type="journal article" date="2001" name="Microb. Drug Resist.">
        <title>Annotated draft genomic sequence from a Streptococcus pneumoniae type 19F clinical isolate.</title>
        <authorList>
            <person name="Dopazo J."/>
            <person name="Mendoza A."/>
            <person name="Herrero J."/>
            <person name="Caldara F."/>
            <person name="Humbert Y."/>
            <person name="Friedli L."/>
            <person name="Guerrier M."/>
            <person name="Grand-Schenk E."/>
            <person name="Gandin C."/>
            <person name="de Francesco M."/>
            <person name="Polissi A."/>
            <person name="Buell G."/>
            <person name="Feger G."/>
            <person name="Garcia E."/>
            <person name="Peitsch M."/>
            <person name="Garcia-Bustos J.F."/>
        </authorList>
    </citation>
    <scope>NUCLEOTIDE SEQUENCE [LARGE SCALE GENOMIC DNA]</scope>
    <source>
        <strain>G54</strain>
    </source>
</reference>
<reference key="2">
    <citation type="submission" date="2008-03" db="EMBL/GenBank/DDBJ databases">
        <title>Pneumococcal beta glucoside metabolism investigated by whole genome comparison.</title>
        <authorList>
            <person name="Mulas L."/>
            <person name="Trappetti C."/>
            <person name="Hakenbeck R."/>
            <person name="Iannelli F."/>
            <person name="Pozzi G."/>
            <person name="Davidsen T.M."/>
            <person name="Tettelin H."/>
            <person name="Oggioni M."/>
        </authorList>
    </citation>
    <scope>NUCLEOTIDE SEQUENCE [LARGE SCALE GENOMIC DNA]</scope>
    <source>
        <strain>G54</strain>
    </source>
</reference>
<sequence>MSQSYINVIGAGLAGSEAAYQIAERGIPVKLYEMRGVKSTPQHKTDNFAELVCSNSLRGDALTNAVGLLKEEMRRLGSVILESAEATRVPAGGALAVDRDGFSQMVTEKVANHPLIEVVRDEITELPTDVITVIATGPLTSDALAEKIHALNDGDGFYFYDAAAPIIDVNTIDMSKVYLKSRYDKGEAAYLNAPMTKQEFMDFHEALVNAEEAPLNSFEKEKYFEGCMPIEVMAKRGIKTMLYGPMKPVGLEYPDDYTGPRDGEFKTPYAVVQLRQDNAAGSLYNIVGFQTHLKWGEQKRVFQMIPGLENAEFVRYGVMHRNSYMDSPNLLEQTYRSKKQPNLFFAGQMTGVEGYVESAASGLVAGINAARLFKEESEVIFPETTAIGSLAHYITHADSKHFQPMNVNFGIIKELEGERIRDKKARYEKIAERALADLEEFLTV</sequence>
<dbReference type="EC" id="2.1.1.74" evidence="1"/>
<dbReference type="EMBL" id="CP001015">
    <property type="protein sequence ID" value="ACF56048.1"/>
    <property type="molecule type" value="Genomic_DNA"/>
</dbReference>
<dbReference type="SMR" id="B5E446"/>
<dbReference type="KEGG" id="spx:SPG_0870"/>
<dbReference type="HOGENOM" id="CLU_033057_1_0_9"/>
<dbReference type="GO" id="GO:0005829">
    <property type="term" value="C:cytosol"/>
    <property type="evidence" value="ECO:0007669"/>
    <property type="project" value="TreeGrafter"/>
</dbReference>
<dbReference type="GO" id="GO:0050660">
    <property type="term" value="F:flavin adenine dinucleotide binding"/>
    <property type="evidence" value="ECO:0007669"/>
    <property type="project" value="UniProtKB-UniRule"/>
</dbReference>
<dbReference type="GO" id="GO:0047151">
    <property type="term" value="F:tRNA (uracil(54)-C5)-methyltransferase activity, 5,10-methylenetetrahydrofolate-dependent"/>
    <property type="evidence" value="ECO:0007669"/>
    <property type="project" value="UniProtKB-UniRule"/>
</dbReference>
<dbReference type="GO" id="GO:0030488">
    <property type="term" value="P:tRNA methylation"/>
    <property type="evidence" value="ECO:0007669"/>
    <property type="project" value="TreeGrafter"/>
</dbReference>
<dbReference type="GO" id="GO:0002098">
    <property type="term" value="P:tRNA wobble uridine modification"/>
    <property type="evidence" value="ECO:0007669"/>
    <property type="project" value="TreeGrafter"/>
</dbReference>
<dbReference type="FunFam" id="3.50.50.60:FF:000035">
    <property type="entry name" value="Methylenetetrahydrofolate--tRNA-(uracil-5-)-methyltransferase TrmFO"/>
    <property type="match status" value="1"/>
</dbReference>
<dbReference type="FunFam" id="3.50.50.60:FF:000040">
    <property type="entry name" value="Methylenetetrahydrofolate--tRNA-(uracil-5-)-methyltransferase TrmFO"/>
    <property type="match status" value="1"/>
</dbReference>
<dbReference type="Gene3D" id="3.50.50.60">
    <property type="entry name" value="FAD/NAD(P)-binding domain"/>
    <property type="match status" value="2"/>
</dbReference>
<dbReference type="HAMAP" id="MF_01037">
    <property type="entry name" value="TrmFO"/>
    <property type="match status" value="1"/>
</dbReference>
<dbReference type="InterPro" id="IPR036188">
    <property type="entry name" value="FAD/NAD-bd_sf"/>
</dbReference>
<dbReference type="InterPro" id="IPR002218">
    <property type="entry name" value="MnmG-rel"/>
</dbReference>
<dbReference type="InterPro" id="IPR020595">
    <property type="entry name" value="MnmG-rel_CS"/>
</dbReference>
<dbReference type="InterPro" id="IPR040131">
    <property type="entry name" value="MnmG_N"/>
</dbReference>
<dbReference type="InterPro" id="IPR004417">
    <property type="entry name" value="TrmFO"/>
</dbReference>
<dbReference type="NCBIfam" id="TIGR00137">
    <property type="entry name" value="gid_trmFO"/>
    <property type="match status" value="1"/>
</dbReference>
<dbReference type="NCBIfam" id="NF003739">
    <property type="entry name" value="PRK05335.1"/>
    <property type="match status" value="1"/>
</dbReference>
<dbReference type="PANTHER" id="PTHR11806">
    <property type="entry name" value="GLUCOSE INHIBITED DIVISION PROTEIN A"/>
    <property type="match status" value="1"/>
</dbReference>
<dbReference type="PANTHER" id="PTHR11806:SF2">
    <property type="entry name" value="METHYLENETETRAHYDROFOLATE--TRNA-(URACIL-5-)-METHYLTRANSFERASE TRMFO"/>
    <property type="match status" value="1"/>
</dbReference>
<dbReference type="Pfam" id="PF01134">
    <property type="entry name" value="GIDA"/>
    <property type="match status" value="1"/>
</dbReference>
<dbReference type="SUPFAM" id="SSF51905">
    <property type="entry name" value="FAD/NAD(P)-binding domain"/>
    <property type="match status" value="1"/>
</dbReference>
<dbReference type="PROSITE" id="PS01281">
    <property type="entry name" value="GIDA_2"/>
    <property type="match status" value="1"/>
</dbReference>
<comment type="function">
    <text evidence="1">Catalyzes the folate-dependent formation of 5-methyl-uridine at position 54 (M-5-U54) in all tRNAs.</text>
</comment>
<comment type="catalytic activity">
    <reaction evidence="1">
        <text>uridine(54) in tRNA + (6R)-5,10-methylene-5,6,7,8-tetrahydrofolate + NADH + H(+) = 5-methyluridine(54) in tRNA + (6S)-5,6,7,8-tetrahydrofolate + NAD(+)</text>
        <dbReference type="Rhea" id="RHEA:16873"/>
        <dbReference type="Rhea" id="RHEA-COMP:10167"/>
        <dbReference type="Rhea" id="RHEA-COMP:10193"/>
        <dbReference type="ChEBI" id="CHEBI:15378"/>
        <dbReference type="ChEBI" id="CHEBI:15636"/>
        <dbReference type="ChEBI" id="CHEBI:57453"/>
        <dbReference type="ChEBI" id="CHEBI:57540"/>
        <dbReference type="ChEBI" id="CHEBI:57945"/>
        <dbReference type="ChEBI" id="CHEBI:65315"/>
        <dbReference type="ChEBI" id="CHEBI:74447"/>
        <dbReference type="EC" id="2.1.1.74"/>
    </reaction>
</comment>
<comment type="catalytic activity">
    <reaction evidence="1">
        <text>uridine(54) in tRNA + (6R)-5,10-methylene-5,6,7,8-tetrahydrofolate + NADPH + H(+) = 5-methyluridine(54) in tRNA + (6S)-5,6,7,8-tetrahydrofolate + NADP(+)</text>
        <dbReference type="Rhea" id="RHEA:62372"/>
        <dbReference type="Rhea" id="RHEA-COMP:10167"/>
        <dbReference type="Rhea" id="RHEA-COMP:10193"/>
        <dbReference type="ChEBI" id="CHEBI:15378"/>
        <dbReference type="ChEBI" id="CHEBI:15636"/>
        <dbReference type="ChEBI" id="CHEBI:57453"/>
        <dbReference type="ChEBI" id="CHEBI:57783"/>
        <dbReference type="ChEBI" id="CHEBI:58349"/>
        <dbReference type="ChEBI" id="CHEBI:65315"/>
        <dbReference type="ChEBI" id="CHEBI:74447"/>
        <dbReference type="EC" id="2.1.1.74"/>
    </reaction>
</comment>
<comment type="cofactor">
    <cofactor evidence="1">
        <name>FAD</name>
        <dbReference type="ChEBI" id="CHEBI:57692"/>
    </cofactor>
</comment>
<comment type="subcellular location">
    <subcellularLocation>
        <location evidence="1">Cytoplasm</location>
    </subcellularLocation>
</comment>
<comment type="similarity">
    <text evidence="1">Belongs to the MnmG family. TrmFO subfamily.</text>
</comment>
<organism>
    <name type="scientific">Streptococcus pneumoniae serotype 19F (strain G54)</name>
    <dbReference type="NCBI Taxonomy" id="512566"/>
    <lineage>
        <taxon>Bacteria</taxon>
        <taxon>Bacillati</taxon>
        <taxon>Bacillota</taxon>
        <taxon>Bacilli</taxon>
        <taxon>Lactobacillales</taxon>
        <taxon>Streptococcaceae</taxon>
        <taxon>Streptococcus</taxon>
    </lineage>
</organism>
<name>TRMFO_STRP4</name>
<protein>
    <recommendedName>
        <fullName evidence="1">Methylenetetrahydrofolate--tRNA-(uracil-5-)-methyltransferase TrmFO</fullName>
        <ecNumber evidence="1">2.1.1.74</ecNumber>
    </recommendedName>
    <alternativeName>
        <fullName evidence="1">Folate-dependent tRNA (uracil-5-)-methyltransferase</fullName>
    </alternativeName>
    <alternativeName>
        <fullName evidence="1">Folate-dependent tRNA(M-5-U54)-methyltransferase</fullName>
    </alternativeName>
</protein>
<gene>
    <name evidence="1" type="primary">trmFO</name>
    <name type="ordered locus">SPG_0870</name>
</gene>
<accession>B5E446</accession>